<dbReference type="EC" id="3.6.-.-"/>
<dbReference type="EMBL" id="Z94043">
    <property type="protein sequence ID" value="CAB08056.1"/>
    <property type="molecule type" value="Genomic_DNA"/>
</dbReference>
<dbReference type="EMBL" id="AL009126">
    <property type="protein sequence ID" value="CAB15483.1"/>
    <property type="molecule type" value="Genomic_DNA"/>
</dbReference>
<dbReference type="PIR" id="G70031">
    <property type="entry name" value="G70031"/>
</dbReference>
<dbReference type="RefSeq" id="NP_391358.1">
    <property type="nucleotide sequence ID" value="NC_000964.3"/>
</dbReference>
<dbReference type="RefSeq" id="WP_010886622.1">
    <property type="nucleotide sequence ID" value="NZ_OZ025638.1"/>
</dbReference>
<dbReference type="SMR" id="O06972"/>
<dbReference type="FunCoup" id="O06972">
    <property type="interactions" value="176"/>
</dbReference>
<dbReference type="STRING" id="224308.BSU34780"/>
<dbReference type="PaxDb" id="224308-BSU34780"/>
<dbReference type="EnsemblBacteria" id="CAB15483">
    <property type="protein sequence ID" value="CAB15483"/>
    <property type="gene ID" value="BSU_34780"/>
</dbReference>
<dbReference type="GeneID" id="936528"/>
<dbReference type="KEGG" id="bsu:BSU34780"/>
<dbReference type="PATRIC" id="fig|224308.43.peg.3643"/>
<dbReference type="eggNOG" id="COG1051">
    <property type="taxonomic scope" value="Bacteria"/>
</dbReference>
<dbReference type="InParanoid" id="O06972"/>
<dbReference type="OrthoDB" id="9800186at2"/>
<dbReference type="PhylomeDB" id="O06972"/>
<dbReference type="BioCyc" id="BSUB:BSU34780-MONOMER"/>
<dbReference type="Proteomes" id="UP000001570">
    <property type="component" value="Chromosome"/>
</dbReference>
<dbReference type="GO" id="GO:0016787">
    <property type="term" value="F:hydrolase activity"/>
    <property type="evidence" value="ECO:0007669"/>
    <property type="project" value="UniProtKB-KW"/>
</dbReference>
<dbReference type="GO" id="GO:0046872">
    <property type="term" value="F:metal ion binding"/>
    <property type="evidence" value="ECO:0007669"/>
    <property type="project" value="UniProtKB-KW"/>
</dbReference>
<dbReference type="CDD" id="cd18875">
    <property type="entry name" value="NUDIX_Hydrolase"/>
    <property type="match status" value="1"/>
</dbReference>
<dbReference type="Gene3D" id="3.90.79.10">
    <property type="entry name" value="Nucleoside Triphosphate Pyrophosphohydrolase"/>
    <property type="match status" value="1"/>
</dbReference>
<dbReference type="InterPro" id="IPR020476">
    <property type="entry name" value="Nudix_hydrolase"/>
</dbReference>
<dbReference type="InterPro" id="IPR015797">
    <property type="entry name" value="NUDIX_hydrolase-like_dom_sf"/>
</dbReference>
<dbReference type="InterPro" id="IPR000086">
    <property type="entry name" value="NUDIX_hydrolase_dom"/>
</dbReference>
<dbReference type="PANTHER" id="PTHR43758">
    <property type="entry name" value="7,8-DIHYDRO-8-OXOGUANINE TRIPHOSPHATASE"/>
    <property type="match status" value="1"/>
</dbReference>
<dbReference type="PANTHER" id="PTHR43758:SF2">
    <property type="entry name" value="OXIDIZED PURINE NUCLEOSIDE TRIPHOSPHATE HYDROLASE"/>
    <property type="match status" value="1"/>
</dbReference>
<dbReference type="Pfam" id="PF00293">
    <property type="entry name" value="NUDIX"/>
    <property type="match status" value="1"/>
</dbReference>
<dbReference type="PRINTS" id="PR00502">
    <property type="entry name" value="NUDIXFAMILY"/>
</dbReference>
<dbReference type="SUPFAM" id="SSF55811">
    <property type="entry name" value="Nudix"/>
    <property type="match status" value="1"/>
</dbReference>
<dbReference type="PROSITE" id="PS51462">
    <property type="entry name" value="NUDIX"/>
    <property type="match status" value="1"/>
</dbReference>
<evidence type="ECO:0000250" key="1"/>
<evidence type="ECO:0000255" key="2">
    <source>
        <dbReference type="PROSITE-ProRule" id="PRU00794"/>
    </source>
</evidence>
<evidence type="ECO:0000269" key="3">
    <source>
    </source>
</evidence>
<evidence type="ECO:0000305" key="4"/>
<gene>
    <name type="primary">yvcI</name>
    <name type="ordered locus">BSU34780</name>
</gene>
<reference key="1">
    <citation type="submission" date="1997-04" db="EMBL/GenBank/DDBJ databases">
        <authorList>
            <person name="Denizot F."/>
        </authorList>
    </citation>
    <scope>NUCLEOTIDE SEQUENCE [GENOMIC DNA]</scope>
</reference>
<reference key="2">
    <citation type="journal article" date="1997" name="Nature">
        <title>The complete genome sequence of the Gram-positive bacterium Bacillus subtilis.</title>
        <authorList>
            <person name="Kunst F."/>
            <person name="Ogasawara N."/>
            <person name="Moszer I."/>
            <person name="Albertini A.M."/>
            <person name="Alloni G."/>
            <person name="Azevedo V."/>
            <person name="Bertero M.G."/>
            <person name="Bessieres P."/>
            <person name="Bolotin A."/>
            <person name="Borchert S."/>
            <person name="Borriss R."/>
            <person name="Boursier L."/>
            <person name="Brans A."/>
            <person name="Braun M."/>
            <person name="Brignell S.C."/>
            <person name="Bron S."/>
            <person name="Brouillet S."/>
            <person name="Bruschi C.V."/>
            <person name="Caldwell B."/>
            <person name="Capuano V."/>
            <person name="Carter N.M."/>
            <person name="Choi S.-K."/>
            <person name="Codani J.-J."/>
            <person name="Connerton I.F."/>
            <person name="Cummings N.J."/>
            <person name="Daniel R.A."/>
            <person name="Denizot F."/>
            <person name="Devine K.M."/>
            <person name="Duesterhoeft A."/>
            <person name="Ehrlich S.D."/>
            <person name="Emmerson P.T."/>
            <person name="Entian K.-D."/>
            <person name="Errington J."/>
            <person name="Fabret C."/>
            <person name="Ferrari E."/>
            <person name="Foulger D."/>
            <person name="Fritz C."/>
            <person name="Fujita M."/>
            <person name="Fujita Y."/>
            <person name="Fuma S."/>
            <person name="Galizzi A."/>
            <person name="Galleron N."/>
            <person name="Ghim S.-Y."/>
            <person name="Glaser P."/>
            <person name="Goffeau A."/>
            <person name="Golightly E.J."/>
            <person name="Grandi G."/>
            <person name="Guiseppi G."/>
            <person name="Guy B.J."/>
            <person name="Haga K."/>
            <person name="Haiech J."/>
            <person name="Harwood C.R."/>
            <person name="Henaut A."/>
            <person name="Hilbert H."/>
            <person name="Holsappel S."/>
            <person name="Hosono S."/>
            <person name="Hullo M.-F."/>
            <person name="Itaya M."/>
            <person name="Jones L.-M."/>
            <person name="Joris B."/>
            <person name="Karamata D."/>
            <person name="Kasahara Y."/>
            <person name="Klaerr-Blanchard M."/>
            <person name="Klein C."/>
            <person name="Kobayashi Y."/>
            <person name="Koetter P."/>
            <person name="Koningstein G."/>
            <person name="Krogh S."/>
            <person name="Kumano M."/>
            <person name="Kurita K."/>
            <person name="Lapidus A."/>
            <person name="Lardinois S."/>
            <person name="Lauber J."/>
            <person name="Lazarevic V."/>
            <person name="Lee S.-M."/>
            <person name="Levine A."/>
            <person name="Liu H."/>
            <person name="Masuda S."/>
            <person name="Mauel C."/>
            <person name="Medigue C."/>
            <person name="Medina N."/>
            <person name="Mellado R.P."/>
            <person name="Mizuno M."/>
            <person name="Moestl D."/>
            <person name="Nakai S."/>
            <person name="Noback M."/>
            <person name="Noone D."/>
            <person name="O'Reilly M."/>
            <person name="Ogawa K."/>
            <person name="Ogiwara A."/>
            <person name="Oudega B."/>
            <person name="Park S.-H."/>
            <person name="Parro V."/>
            <person name="Pohl T.M."/>
            <person name="Portetelle D."/>
            <person name="Porwollik S."/>
            <person name="Prescott A.M."/>
            <person name="Presecan E."/>
            <person name="Pujic P."/>
            <person name="Purnelle B."/>
            <person name="Rapoport G."/>
            <person name="Rey M."/>
            <person name="Reynolds S."/>
            <person name="Rieger M."/>
            <person name="Rivolta C."/>
            <person name="Rocha E."/>
            <person name="Roche B."/>
            <person name="Rose M."/>
            <person name="Sadaie Y."/>
            <person name="Sato T."/>
            <person name="Scanlan E."/>
            <person name="Schleich S."/>
            <person name="Schroeter R."/>
            <person name="Scoffone F."/>
            <person name="Sekiguchi J."/>
            <person name="Sekowska A."/>
            <person name="Seror S.J."/>
            <person name="Serror P."/>
            <person name="Shin B.-S."/>
            <person name="Soldo B."/>
            <person name="Sorokin A."/>
            <person name="Tacconi E."/>
            <person name="Takagi T."/>
            <person name="Takahashi H."/>
            <person name="Takemaru K."/>
            <person name="Takeuchi M."/>
            <person name="Tamakoshi A."/>
            <person name="Tanaka T."/>
            <person name="Terpstra P."/>
            <person name="Tognoni A."/>
            <person name="Tosato V."/>
            <person name="Uchiyama S."/>
            <person name="Vandenbol M."/>
            <person name="Vannier F."/>
            <person name="Vassarotti A."/>
            <person name="Viari A."/>
            <person name="Wambutt R."/>
            <person name="Wedler E."/>
            <person name="Wedler H."/>
            <person name="Weitzenegger T."/>
            <person name="Winters P."/>
            <person name="Wipat A."/>
            <person name="Yamamoto H."/>
            <person name="Yamane K."/>
            <person name="Yasumoto K."/>
            <person name="Yata K."/>
            <person name="Yoshida K."/>
            <person name="Yoshikawa H.-F."/>
            <person name="Zumstein E."/>
            <person name="Yoshikawa H."/>
            <person name="Danchin A."/>
        </authorList>
    </citation>
    <scope>NUCLEOTIDE SEQUENCE [LARGE SCALE GENOMIC DNA]</scope>
    <source>
        <strain>168</strain>
    </source>
</reference>
<reference key="3">
    <citation type="journal article" date="2000" name="J. Gen. Appl. Microbiol.">
        <title>Genetic analysis of Bacillus subtilis mutator genes.</title>
        <authorList>
            <person name="Sasaki M."/>
            <person name="Yonemura Y."/>
            <person name="Kurusu Y."/>
        </authorList>
    </citation>
    <scope>DISRUPTION PHENOTYPE</scope>
    <source>
        <strain>168</strain>
    </source>
</reference>
<keyword id="KW-0378">Hydrolase</keyword>
<keyword id="KW-0460">Magnesium</keyword>
<keyword id="KW-0479">Metal-binding</keyword>
<keyword id="KW-1185">Reference proteome</keyword>
<accession>O06972</accession>
<accession>Q795F8</accession>
<comment type="cofactor">
    <cofactor evidence="1">
        <name>Mg(2+)</name>
        <dbReference type="ChEBI" id="CHEBI:18420"/>
    </cofactor>
</comment>
<comment type="disruption phenotype">
    <text evidence="3">Cells lacking this gene have an unchanged spontaneous mutation frequency, even in triple mutT/yjhB/yvcI disruptions.</text>
</comment>
<comment type="similarity">
    <text evidence="4">Belongs to the Nudix hydrolase family.</text>
</comment>
<proteinExistence type="inferred from homology"/>
<protein>
    <recommendedName>
        <fullName>Uncharacterized Nudix hydrolase YvcI</fullName>
        <ecNumber>3.6.-.-</ecNumber>
    </recommendedName>
</protein>
<feature type="chain" id="PRO_0000375871" description="Uncharacterized Nudix hydrolase YvcI">
    <location>
        <begin position="1"/>
        <end position="158"/>
    </location>
</feature>
<feature type="domain" description="Nudix hydrolase" evidence="2">
    <location>
        <begin position="3"/>
        <end position="130"/>
    </location>
</feature>
<feature type="short sequence motif" description="Nudix box">
    <location>
        <begin position="34"/>
        <end position="55"/>
    </location>
</feature>
<feature type="binding site" evidence="1">
    <location>
        <position position="49"/>
    </location>
    <ligand>
        <name>Mg(2+)</name>
        <dbReference type="ChEBI" id="CHEBI:18420"/>
    </ligand>
</feature>
<feature type="binding site" evidence="1">
    <location>
        <position position="53"/>
    </location>
    <ligand>
        <name>Mg(2+)</name>
        <dbReference type="ChEBI" id="CHEBI:18420"/>
    </ligand>
</feature>
<organism>
    <name type="scientific">Bacillus subtilis (strain 168)</name>
    <dbReference type="NCBI Taxonomy" id="224308"/>
    <lineage>
        <taxon>Bacteria</taxon>
        <taxon>Bacillati</taxon>
        <taxon>Bacillota</taxon>
        <taxon>Bacilli</taxon>
        <taxon>Bacillales</taxon>
        <taxon>Bacillaceae</taxon>
        <taxon>Bacillus</taxon>
    </lineage>
</organism>
<name>YVCI_BACSU</name>
<sequence>MTYLQRVTNCVLQTDDKVLLLQKPRRGWWVAPGGKMESGESVRDSVIREYREETGIYIINPQLKGVFTFIIKDGDHIVSEWMMFTFVADSYTGQNVSESEEGKLQWHDVNDIQNLPMAPGDGHILDFMMKGQGLLHGTFTYTPEFELLSYRLDPQHIK</sequence>